<comment type="function">
    <text evidence="1">Catalyzes the transfer of an acyl group from acyl-phosphate (acyl-PO(4)) to glycerol-3-phosphate (G3P) to form lysophosphatidic acid (LPA). This enzyme utilizes acyl-phosphate as fatty acyl donor, but not acyl-CoA or acyl-ACP.</text>
</comment>
<comment type="catalytic activity">
    <reaction evidence="1">
        <text>an acyl phosphate + sn-glycerol 3-phosphate = a 1-acyl-sn-glycero-3-phosphate + phosphate</text>
        <dbReference type="Rhea" id="RHEA:34075"/>
        <dbReference type="ChEBI" id="CHEBI:43474"/>
        <dbReference type="ChEBI" id="CHEBI:57597"/>
        <dbReference type="ChEBI" id="CHEBI:57970"/>
        <dbReference type="ChEBI" id="CHEBI:59918"/>
        <dbReference type="EC" id="2.3.1.275"/>
    </reaction>
</comment>
<comment type="pathway">
    <text evidence="1">Lipid metabolism; phospholipid metabolism.</text>
</comment>
<comment type="subunit">
    <text evidence="1">Probably interacts with PlsX.</text>
</comment>
<comment type="subcellular location">
    <subcellularLocation>
        <location evidence="1">Cell inner membrane</location>
        <topology evidence="1">Multi-pass membrane protein</topology>
    </subcellularLocation>
</comment>
<comment type="similarity">
    <text evidence="1">Belongs to the PlsY family.</text>
</comment>
<dbReference type="EC" id="2.3.1.275" evidence="1"/>
<dbReference type="EMBL" id="CP000668">
    <property type="protein sequence ID" value="ABP38844.1"/>
    <property type="molecule type" value="Genomic_DNA"/>
</dbReference>
<dbReference type="RefSeq" id="WP_002217581.1">
    <property type="nucleotide sequence ID" value="NZ_CP009715.1"/>
</dbReference>
<dbReference type="SMR" id="A4THT2"/>
<dbReference type="GeneID" id="57973977"/>
<dbReference type="KEGG" id="ypp:YPDSF_0431"/>
<dbReference type="PATRIC" id="fig|386656.14.peg.1738"/>
<dbReference type="UniPathway" id="UPA00085"/>
<dbReference type="GO" id="GO:0005886">
    <property type="term" value="C:plasma membrane"/>
    <property type="evidence" value="ECO:0007669"/>
    <property type="project" value="UniProtKB-SubCell"/>
</dbReference>
<dbReference type="GO" id="GO:0043772">
    <property type="term" value="F:acyl-phosphate glycerol-3-phosphate acyltransferase activity"/>
    <property type="evidence" value="ECO:0007669"/>
    <property type="project" value="UniProtKB-UniRule"/>
</dbReference>
<dbReference type="GO" id="GO:0008654">
    <property type="term" value="P:phospholipid biosynthetic process"/>
    <property type="evidence" value="ECO:0007669"/>
    <property type="project" value="UniProtKB-UniRule"/>
</dbReference>
<dbReference type="HAMAP" id="MF_01043">
    <property type="entry name" value="PlsY"/>
    <property type="match status" value="1"/>
</dbReference>
<dbReference type="InterPro" id="IPR003811">
    <property type="entry name" value="G3P_acylTferase_PlsY"/>
</dbReference>
<dbReference type="NCBIfam" id="TIGR00023">
    <property type="entry name" value="glycerol-3-phosphate 1-O-acyltransferase PlsY"/>
    <property type="match status" value="1"/>
</dbReference>
<dbReference type="PANTHER" id="PTHR30309:SF0">
    <property type="entry name" value="GLYCEROL-3-PHOSPHATE ACYLTRANSFERASE-RELATED"/>
    <property type="match status" value="1"/>
</dbReference>
<dbReference type="PANTHER" id="PTHR30309">
    <property type="entry name" value="INNER MEMBRANE PROTEIN YGIH"/>
    <property type="match status" value="1"/>
</dbReference>
<dbReference type="Pfam" id="PF02660">
    <property type="entry name" value="G3P_acyltransf"/>
    <property type="match status" value="1"/>
</dbReference>
<dbReference type="SMART" id="SM01207">
    <property type="entry name" value="G3P_acyltransf"/>
    <property type="match status" value="1"/>
</dbReference>
<keyword id="KW-0997">Cell inner membrane</keyword>
<keyword id="KW-1003">Cell membrane</keyword>
<keyword id="KW-0444">Lipid biosynthesis</keyword>
<keyword id="KW-0443">Lipid metabolism</keyword>
<keyword id="KW-0472">Membrane</keyword>
<keyword id="KW-0594">Phospholipid biosynthesis</keyword>
<keyword id="KW-1208">Phospholipid metabolism</keyword>
<keyword id="KW-0808">Transferase</keyword>
<keyword id="KW-0812">Transmembrane</keyword>
<keyword id="KW-1133">Transmembrane helix</keyword>
<feature type="chain" id="PRO_1000064243" description="Glycerol-3-phosphate acyltransferase">
    <location>
        <begin position="1"/>
        <end position="216"/>
    </location>
</feature>
<feature type="transmembrane region" description="Helical" evidence="1">
    <location>
        <begin position="4"/>
        <end position="24"/>
    </location>
</feature>
<feature type="transmembrane region" description="Helical" evidence="1">
    <location>
        <begin position="56"/>
        <end position="76"/>
    </location>
</feature>
<feature type="transmembrane region" description="Helical" evidence="1">
    <location>
        <begin position="80"/>
        <end position="100"/>
    </location>
</feature>
<feature type="transmembrane region" description="Helical" evidence="1">
    <location>
        <begin position="112"/>
        <end position="132"/>
    </location>
</feature>
<feature type="transmembrane region" description="Helical" evidence="1">
    <location>
        <begin position="138"/>
        <end position="158"/>
    </location>
</feature>
<sequence length="216" mass="23620">MSAIALGMIIFAYLCGSISSAILVCRVARLPDPRTHGSGNPGATNVLRIGGRTAAVAVLLFDILKGMLPVWIAYLLHIPPLYLGLTAIAACLGHIYPVFFHFKGGKGVATAFGAIAPIGWDLTGLMTGTWLLTVLLSGYSSLGAIVSALIAPFYVWWFKPQFTFPVAMLSCLILMRHHDNIQRLWRGKEGKIWDKLRKKKQKTPAEEAAELEEKED</sequence>
<name>PLSY_YERPP</name>
<evidence type="ECO:0000255" key="1">
    <source>
        <dbReference type="HAMAP-Rule" id="MF_01043"/>
    </source>
</evidence>
<protein>
    <recommendedName>
        <fullName evidence="1">Glycerol-3-phosphate acyltransferase</fullName>
    </recommendedName>
    <alternativeName>
        <fullName evidence="1">Acyl-PO4 G3P acyltransferase</fullName>
    </alternativeName>
    <alternativeName>
        <fullName evidence="1">Acyl-phosphate--glycerol-3-phosphate acyltransferase</fullName>
    </alternativeName>
    <alternativeName>
        <fullName evidence="1">G3P acyltransferase</fullName>
        <shortName evidence="1">GPAT</shortName>
        <ecNumber evidence="1">2.3.1.275</ecNumber>
    </alternativeName>
    <alternativeName>
        <fullName evidence="1">Lysophosphatidic acid synthase</fullName>
        <shortName evidence="1">LPA synthase</shortName>
    </alternativeName>
</protein>
<proteinExistence type="inferred from homology"/>
<accession>A4THT2</accession>
<gene>
    <name evidence="1" type="primary">plsY</name>
    <name type="ordered locus">YPDSF_0431</name>
</gene>
<reference key="1">
    <citation type="submission" date="2007-02" db="EMBL/GenBank/DDBJ databases">
        <title>Complete sequence of chromosome of Yersinia pestis Pestoides F.</title>
        <authorList>
            <consortium name="US DOE Joint Genome Institute"/>
            <person name="Copeland A."/>
            <person name="Lucas S."/>
            <person name="Lapidus A."/>
            <person name="Barry K."/>
            <person name="Detter J.C."/>
            <person name="Glavina del Rio T."/>
            <person name="Hammon N."/>
            <person name="Israni S."/>
            <person name="Dalin E."/>
            <person name="Tice H."/>
            <person name="Pitluck S."/>
            <person name="Di Bartolo G."/>
            <person name="Chain P."/>
            <person name="Malfatti S."/>
            <person name="Shin M."/>
            <person name="Vergez L."/>
            <person name="Schmutz J."/>
            <person name="Larimer F."/>
            <person name="Land M."/>
            <person name="Hauser L."/>
            <person name="Worsham P."/>
            <person name="Chu M."/>
            <person name="Bearden S."/>
            <person name="Garcia E."/>
            <person name="Richardson P."/>
        </authorList>
    </citation>
    <scope>NUCLEOTIDE SEQUENCE [LARGE SCALE GENOMIC DNA]</scope>
    <source>
        <strain>Pestoides F</strain>
    </source>
</reference>
<organism>
    <name type="scientific">Yersinia pestis (strain Pestoides F)</name>
    <dbReference type="NCBI Taxonomy" id="386656"/>
    <lineage>
        <taxon>Bacteria</taxon>
        <taxon>Pseudomonadati</taxon>
        <taxon>Pseudomonadota</taxon>
        <taxon>Gammaproteobacteria</taxon>
        <taxon>Enterobacterales</taxon>
        <taxon>Yersiniaceae</taxon>
        <taxon>Yersinia</taxon>
    </lineage>
</organism>